<name>LIN61_CAEEL</name>
<organism>
    <name type="scientific">Caenorhabditis elegans</name>
    <dbReference type="NCBI Taxonomy" id="6239"/>
    <lineage>
        <taxon>Eukaryota</taxon>
        <taxon>Metazoa</taxon>
        <taxon>Ecdysozoa</taxon>
        <taxon>Nematoda</taxon>
        <taxon>Chromadorea</taxon>
        <taxon>Rhabditida</taxon>
        <taxon>Rhabditina</taxon>
        <taxon>Rhabditomorpha</taxon>
        <taxon>Rhabditoidea</taxon>
        <taxon>Rhabditidae</taxon>
        <taxon>Peloderinae</taxon>
        <taxon>Caenorhabditis</taxon>
    </lineage>
</organism>
<accession>B2D6M2</accession>
<accession>Q21769</accession>
<gene>
    <name type="primary">lin-61</name>
    <name type="ORF">R06C7.7</name>
</gene>
<reference key="1">
    <citation type="journal article" date="1998" name="Science">
        <title>Genome sequence of the nematode C. elegans: a platform for investigating biology.</title>
        <authorList>
            <consortium name="The C. elegans sequencing consortium"/>
        </authorList>
    </citation>
    <scope>NUCLEOTIDE SEQUENCE [LARGE SCALE GENOMIC DNA]</scope>
    <scope>ALTERNATIVE SPLICING</scope>
    <source>
        <strain>Bristol N2</strain>
    </source>
</reference>
<reference key="2">
    <citation type="journal article" date="2007" name="Genetics">
        <title>LIN-61, one of two Caenorhabditis elegans malignant-brain-tumor-repeat-containing proteins, acts with the DRM and NuRD-like protein complexes in vulval development but not in certain other biological processes.</title>
        <authorList>
            <person name="Harrison M.M."/>
            <person name="Lu X."/>
            <person name="Horvitz H.R."/>
        </authorList>
    </citation>
    <scope>FUNCTION</scope>
    <scope>SUBCELLULAR LOCATION</scope>
    <scope>DEVELOPMENTAL STAGE</scope>
    <scope>DISRUPTION PHENOTYPE</scope>
    <scope>MUTAGENESIS OF PRO-253; PHE-368; GLY-371 AND SER-475</scope>
</reference>
<reference key="3">
    <citation type="journal article" date="2011" name="PLoS Genet.">
        <title>H3K9me2/3 binding of the MBT domain protein LIN-61 is essential for Caenorhabditis elegans vulva development.</title>
        <authorList>
            <person name="Koester-Eiserfunke N."/>
            <person name="Fischle W."/>
        </authorList>
    </citation>
    <scope>IDENTIFICATION BY MASS SPECTROMETRY</scope>
    <scope>FUNCTION</scope>
    <scope>INTERACTION WITH HISTONE H3</scope>
    <scope>DISRUPTION PHENOTYPE</scope>
    <scope>DOMAIN MBT</scope>
    <scope>MUTAGENESIS OF ASP-549; PHE-573; TRP-576 AND PHE-580</scope>
    <source>
        <strain>Bristol N2</strain>
    </source>
</reference>
<comment type="function">
    <text evidence="1 2">Synthetic multivulva class B (synMuvB) protein required to repress the induction of vulval development by Ras signaling. Unlike other synMuv proteins it does not associate with the multiprotein DRM complex and the NuRD-like complex. Interaction with methylated histone H3 is essential for vulva development. It has a role in maintaining genome stability.</text>
</comment>
<comment type="subunit">
    <text evidence="2">Interacts preferentially with histone H3 that is dimethylated or trimethylated at 'Lys-9'.</text>
</comment>
<comment type="subcellular location">
    <subcellularLocation>
        <location evidence="1">Nucleus</location>
    </subcellularLocation>
    <subcellularLocation>
        <location evidence="1">Chromosome</location>
    </subcellularLocation>
</comment>
<comment type="alternative products">
    <event type="alternative splicing"/>
    <isoform>
        <id>B2D6M2-1</id>
        <name>b</name>
        <sequence type="displayed"/>
    </isoform>
    <isoform>
        <id>B2D6M2-2</id>
        <name>a</name>
        <sequence type="described" ref="VSP_043612"/>
    </isoform>
</comment>
<comment type="developmental stage">
    <text evidence="1">Expressed from the one-cell embryo to the adult (at protein level).</text>
</comment>
<comment type="domain">
    <text evidence="2">The MBT repeats specifically recognize and bind histone H3 di- and tri-methylated at 'Lys-9' (H3K9me2/3).</text>
</comment>
<comment type="disruption phenotype">
    <text evidence="1 2">Multivulva phenotype in combination with loss of function of class A synMuv genes lin-8, lin-38, lin-56 and lin15A and with the class B synMuv gene hpl-2. Reduction of brood size and defects in the development of germ cells. Loss of function results in suppression of mat-3(ku233) mutant vulval phenotype.</text>
</comment>
<evidence type="ECO:0000269" key="1">
    <source>
    </source>
</evidence>
<evidence type="ECO:0000269" key="2">
    <source>
    </source>
</evidence>
<evidence type="ECO:0000305" key="3"/>
<feature type="chain" id="PRO_0000417369" description="Protein lin-61">
    <location>
        <begin position="1"/>
        <end position="612"/>
    </location>
</feature>
<feature type="repeat" description="MBT 1">
    <location>
        <begin position="143"/>
        <end position="249"/>
    </location>
</feature>
<feature type="repeat" description="MBT 2">
    <location>
        <begin position="263"/>
        <end position="380"/>
    </location>
</feature>
<feature type="repeat" description="MBT 3">
    <location>
        <begin position="381"/>
        <end position="501"/>
    </location>
</feature>
<feature type="repeat" description="MBT 4">
    <location>
        <begin position="508"/>
        <end position="607"/>
    </location>
</feature>
<feature type="splice variant" id="VSP_043612" description="In isoform a." evidence="3">
    <location>
        <begin position="1"/>
        <end position="121"/>
    </location>
</feature>
<feature type="mutagenesis site" description="In allele lin-61(n3624); does not affect binding to histone H3 trimethylated at 'Lys-9'; multivulva phenotype in combination with lin56(n2728)." evidence="1">
    <original>P</original>
    <variation>S</variation>
    <location>
        <position position="253"/>
    </location>
</feature>
<feature type="mutagenesis site" description="In allele lin-61(n3736); reduces binding to histone H3 trimethylated at 'Lys-9'; multivulva phenotype in combination with lin56(n2728)." evidence="1">
    <original>F</original>
    <variation>S</variation>
    <location>
        <position position="368"/>
    </location>
</feature>
<feature type="mutagenesis site" description="In allele lin-61(n3807); abolishes binding to histone H3 trimethylated at 'Lys-9'; multivulva phenotype in combination with lin56(n2728)." evidence="1">
    <original>G</original>
    <variation>E</variation>
    <location>
        <position position="371"/>
    </location>
</feature>
<feature type="mutagenesis site" description="In allele lin-61(n3447); reduces binding to histone H3 trimethylated at 'Lys-9'; multivulva phenotype in combination with lin56(n2728)." evidence="1">
    <original>S</original>
    <variation>N</variation>
    <location>
        <position position="475"/>
    </location>
</feature>
<feature type="mutagenesis site" description="Reduces binding to histone H3 trimethylated at 'Lys-9'; in isoform a." evidence="2">
    <original>D</original>
    <variation>A</variation>
    <location>
        <position position="549"/>
    </location>
</feature>
<feature type="mutagenesis site" description="Abolishes binding to histone H3 trimethylated at 'Lys-9'; when associated A-576 and A-580, in isoform a." evidence="2">
    <original>F</original>
    <variation>A</variation>
    <location>
        <position position="573"/>
    </location>
</feature>
<feature type="mutagenesis site" description="Abolishes binding to histone H3 trimethylated at 'Lys-9'; in isoform a." evidence="2">
    <original>W</original>
    <variation>A</variation>
    <location>
        <position position="576"/>
    </location>
</feature>
<feature type="mutagenesis site" description="Abolishes binding to histone H3 trimethylated at 'Lys-9'; in isoform a." evidence="2">
    <original>F</original>
    <variation>A</variation>
    <location>
        <position position="580"/>
    </location>
</feature>
<protein>
    <recommendedName>
        <fullName>Protein lin-61</fullName>
    </recommendedName>
    <alternativeName>
        <fullName>Abnormal cell lineage protein 61</fullName>
    </alternativeName>
</protein>
<keyword id="KW-0025">Alternative splicing</keyword>
<keyword id="KW-0158">Chromosome</keyword>
<keyword id="KW-0539">Nucleus</keyword>
<keyword id="KW-1185">Reference proteome</keyword>
<keyword id="KW-0677">Repeat</keyword>
<proteinExistence type="evidence at protein level"/>
<dbReference type="EMBL" id="Z71266">
    <property type="protein sequence ID" value="CAA95838.3"/>
    <property type="molecule type" value="Genomic_DNA"/>
</dbReference>
<dbReference type="EMBL" id="Z71266">
    <property type="protein sequence ID" value="CAQ35053.1"/>
    <property type="molecule type" value="Genomic_DNA"/>
</dbReference>
<dbReference type="PIR" id="T23964">
    <property type="entry name" value="T23964"/>
</dbReference>
<dbReference type="RefSeq" id="NP_001122501.1">
    <molecule id="B2D6M2-1"/>
    <property type="nucleotide sequence ID" value="NM_001129029.3"/>
</dbReference>
<dbReference type="RefSeq" id="NP_492050.3">
    <molecule id="B2D6M2-2"/>
    <property type="nucleotide sequence ID" value="NM_059649.4"/>
</dbReference>
<dbReference type="SMR" id="B2D6M2"/>
<dbReference type="BioGRID" id="37910">
    <property type="interactions" value="4"/>
</dbReference>
<dbReference type="FunCoup" id="B2D6M2">
    <property type="interactions" value="2221"/>
</dbReference>
<dbReference type="STRING" id="6239.R06C7.7b.1"/>
<dbReference type="PaxDb" id="6239-R06C7.7b"/>
<dbReference type="PeptideAtlas" id="B2D6M2"/>
<dbReference type="EnsemblMetazoa" id="R06C7.7a.1">
    <molecule id="B2D6M2-2"/>
    <property type="protein sequence ID" value="R06C7.7a.1"/>
    <property type="gene ID" value="WBGene00003041"/>
</dbReference>
<dbReference type="EnsemblMetazoa" id="R06C7.7b.1">
    <molecule id="B2D6M2-1"/>
    <property type="protein sequence ID" value="R06C7.7b.1"/>
    <property type="gene ID" value="WBGene00003041"/>
</dbReference>
<dbReference type="GeneID" id="172467"/>
<dbReference type="KEGG" id="cel:CELE_R06C7.7"/>
<dbReference type="UCSC" id="R06C7.7a.1">
    <property type="organism name" value="c. elegans"/>
</dbReference>
<dbReference type="AGR" id="WB:WBGene00003041"/>
<dbReference type="CTD" id="172467"/>
<dbReference type="WormBase" id="R06C7.7a">
    <molecule id="B2D6M2-2"/>
    <property type="protein sequence ID" value="CE37542"/>
    <property type="gene ID" value="WBGene00003041"/>
    <property type="gene designation" value="lin-61"/>
</dbReference>
<dbReference type="WormBase" id="R06C7.7b">
    <molecule id="B2D6M2-1"/>
    <property type="protein sequence ID" value="CE31573"/>
    <property type="gene ID" value="WBGene00003041"/>
    <property type="gene designation" value="lin-61"/>
</dbReference>
<dbReference type="eggNOG" id="KOG3766">
    <property type="taxonomic scope" value="Eukaryota"/>
</dbReference>
<dbReference type="GeneTree" id="ENSGT00940000169237"/>
<dbReference type="InParanoid" id="B2D6M2"/>
<dbReference type="OMA" id="CAENGMP"/>
<dbReference type="OrthoDB" id="8188861at2759"/>
<dbReference type="PhylomeDB" id="B2D6M2"/>
<dbReference type="PRO" id="PR:B2D6M2"/>
<dbReference type="Proteomes" id="UP000001940">
    <property type="component" value="Chromosome I"/>
</dbReference>
<dbReference type="Bgee" id="WBGene00003041">
    <property type="expression patterns" value="Expressed in germ line (C elegans) and 4 other cell types or tissues"/>
</dbReference>
<dbReference type="GO" id="GO:0000785">
    <property type="term" value="C:chromatin"/>
    <property type="evidence" value="ECO:0000314"/>
    <property type="project" value="WormBase"/>
</dbReference>
<dbReference type="GO" id="GO:0005634">
    <property type="term" value="C:nucleus"/>
    <property type="evidence" value="ECO:0000314"/>
    <property type="project" value="WormBase"/>
</dbReference>
<dbReference type="GO" id="GO:0003682">
    <property type="term" value="F:chromatin binding"/>
    <property type="evidence" value="ECO:0000318"/>
    <property type="project" value="GO_Central"/>
</dbReference>
<dbReference type="GO" id="GO:0042393">
    <property type="term" value="F:histone binding"/>
    <property type="evidence" value="ECO:0000318"/>
    <property type="project" value="GO_Central"/>
</dbReference>
<dbReference type="GO" id="GO:0045892">
    <property type="term" value="P:negative regulation of DNA-templated transcription"/>
    <property type="evidence" value="ECO:0000318"/>
    <property type="project" value="GO_Central"/>
</dbReference>
<dbReference type="GO" id="GO:0040025">
    <property type="term" value="P:vulval development"/>
    <property type="evidence" value="ECO:0000316"/>
    <property type="project" value="WormBase"/>
</dbReference>
<dbReference type="CDD" id="cd20088">
    <property type="entry name" value="MBT"/>
    <property type="match status" value="1"/>
</dbReference>
<dbReference type="CDD" id="cd20097">
    <property type="entry name" value="MBT_dSfmbt-like_rpt1"/>
    <property type="match status" value="1"/>
</dbReference>
<dbReference type="CDD" id="cd20100">
    <property type="entry name" value="MBT_dSfmbt-like_rpt4"/>
    <property type="match status" value="1"/>
</dbReference>
<dbReference type="Gene3D" id="2.30.30.140">
    <property type="match status" value="4"/>
</dbReference>
<dbReference type="InterPro" id="IPR004092">
    <property type="entry name" value="Mbt"/>
</dbReference>
<dbReference type="InterPro" id="IPR050548">
    <property type="entry name" value="PcG_chromatin_remod_factors"/>
</dbReference>
<dbReference type="PANTHER" id="PTHR12247:SF131">
    <property type="entry name" value="LD05287P"/>
    <property type="match status" value="1"/>
</dbReference>
<dbReference type="PANTHER" id="PTHR12247">
    <property type="entry name" value="POLYCOMB GROUP PROTEIN"/>
    <property type="match status" value="1"/>
</dbReference>
<dbReference type="Pfam" id="PF02820">
    <property type="entry name" value="MBT"/>
    <property type="match status" value="3"/>
</dbReference>
<dbReference type="SMART" id="SM00561">
    <property type="entry name" value="MBT"/>
    <property type="match status" value="3"/>
</dbReference>
<dbReference type="SUPFAM" id="SSF63748">
    <property type="entry name" value="Tudor/PWWP/MBT"/>
    <property type="match status" value="4"/>
</dbReference>
<dbReference type="PROSITE" id="PS51079">
    <property type="entry name" value="MBT"/>
    <property type="match status" value="4"/>
</dbReference>
<sequence>MLKLVILCFALFYNTVSSTRFLFGVEVKCDFDEVFQLTVSHWEDDGNTFWDRDEDITGRMTMFARKKIFFYQDGHHGFEFGKLEPYGWFLHNCTKNGNFREYRHGLSSTSGSNGLEYIEYTMSEFLKIVRANKKSDRKLDKTYLWESYLHQFEKGKTSFIPVEAFNRNLTVNFNECVKEGVIFETVVHDYDKNCDSIQVRWFARIEKVCGYRVLAQFIGADTKFWLNILSDDMFGLANAAMSDPNMDKIVYAPPLAINEEYQNDMVNYVNNCIDGEIVGQTSLSPKFDEGKALLSKHRFKVGQRLELLNYSNSTEIRVARIQEICGRRMNVSITKKDFPESLPDADDDRQVFSSGSQYWIDEGSFFIFPVGFAAVNGYQLNAKKEYIEHTNKIAQAIKNGENPRYDSDDVTFDQLAKDPIDPMIWRKVKVGQKFELIDPLAQQFNNLHVASILKFCKTEGYLIVGMDGPDALEDSFPIHINNTFMFPVGYAEKYNLELVPPDEFKGTFRWDEYLEKESAETLPLDLFKPMPSQERLDKFKVGLRLEAADMCENQFICPATVKSVHGRLINVNFDGWDEEFDELYDVDSHDILPIGWCEAHSYVLQPPKKYNY</sequence>